<proteinExistence type="inferred from homology"/>
<sequence>MSIEGVLKEGFVTTTADKLINWTRTGSLWPMTFGLACCAVEMMHAGAARYDLDRFGVVFRPSPRQSDVMIVAGTLCNKMAPALRKVYDQMAEPRWVISMGSCANGGGYYHYSYSVVRGCDRIVPVDVYVPGCPPTAEALVYGVIQLQAKIRRTNTIARQ</sequence>
<protein>
    <recommendedName>
        <fullName evidence="2">NADH-quinone oxidoreductase subunit B</fullName>
        <ecNumber evidence="2">7.1.1.-</ecNumber>
    </recommendedName>
    <alternativeName>
        <fullName evidence="2">NADH dehydrogenase I subunit B</fullName>
    </alternativeName>
    <alternativeName>
        <fullName evidence="2">NDH-1 subunit B</fullName>
    </alternativeName>
</protein>
<organism>
    <name type="scientific">Paraburkholderia phymatum (strain DSM 17167 / CIP 108236 / LMG 21445 / STM815)</name>
    <name type="common">Burkholderia phymatum</name>
    <dbReference type="NCBI Taxonomy" id="391038"/>
    <lineage>
        <taxon>Bacteria</taxon>
        <taxon>Pseudomonadati</taxon>
        <taxon>Pseudomonadota</taxon>
        <taxon>Betaproteobacteria</taxon>
        <taxon>Burkholderiales</taxon>
        <taxon>Burkholderiaceae</taxon>
        <taxon>Paraburkholderia</taxon>
    </lineage>
</organism>
<reference key="1">
    <citation type="journal article" date="2014" name="Stand. Genomic Sci.">
        <title>Complete genome sequence of Burkholderia phymatum STM815(T), a broad host range and efficient nitrogen-fixing symbiont of Mimosa species.</title>
        <authorList>
            <person name="Moulin L."/>
            <person name="Klonowska A."/>
            <person name="Caroline B."/>
            <person name="Booth K."/>
            <person name="Vriezen J.A."/>
            <person name="Melkonian R."/>
            <person name="James E.K."/>
            <person name="Young J.P."/>
            <person name="Bena G."/>
            <person name="Hauser L."/>
            <person name="Land M."/>
            <person name="Kyrpides N."/>
            <person name="Bruce D."/>
            <person name="Chain P."/>
            <person name="Copeland A."/>
            <person name="Pitluck S."/>
            <person name="Woyke T."/>
            <person name="Lizotte-Waniewski M."/>
            <person name="Bristow J."/>
            <person name="Riley M."/>
        </authorList>
    </citation>
    <scope>NUCLEOTIDE SEQUENCE [LARGE SCALE GENOMIC DNA]</scope>
    <source>
        <strain>DSM 17167 / CIP 108236 / LMG 21445 / STM815</strain>
    </source>
</reference>
<gene>
    <name evidence="2" type="primary">nuoB</name>
    <name type="ordered locus">Bphy_2008</name>
</gene>
<accession>B2JDM7</accession>
<feature type="chain" id="PRO_0000358378" description="NADH-quinone oxidoreductase subunit B">
    <location>
        <begin position="1"/>
        <end position="159"/>
    </location>
</feature>
<feature type="binding site" evidence="2">
    <location>
        <position position="37"/>
    </location>
    <ligand>
        <name>[4Fe-4S] cluster</name>
        <dbReference type="ChEBI" id="CHEBI:49883"/>
    </ligand>
</feature>
<feature type="binding site" evidence="2">
    <location>
        <position position="38"/>
    </location>
    <ligand>
        <name>[4Fe-4S] cluster</name>
        <dbReference type="ChEBI" id="CHEBI:49883"/>
    </ligand>
</feature>
<feature type="binding site" evidence="2">
    <location>
        <position position="102"/>
    </location>
    <ligand>
        <name>[4Fe-4S] cluster</name>
        <dbReference type="ChEBI" id="CHEBI:49883"/>
    </ligand>
</feature>
<feature type="binding site" evidence="2">
    <location>
        <position position="132"/>
    </location>
    <ligand>
        <name>[4Fe-4S] cluster</name>
        <dbReference type="ChEBI" id="CHEBI:49883"/>
    </ligand>
</feature>
<name>NUOB_PARP8</name>
<comment type="function">
    <text evidence="1">NDH-1 shuttles electrons from NADH, via FMN and iron-sulfur (Fe-S) centers, to quinones in the respiratory chain. Couples the redox reaction to proton translocation (for every two electrons transferred, four hydrogen ions are translocated across the cytoplasmic membrane), and thus conserves the redox energy in a proton gradient (By similarity).</text>
</comment>
<comment type="catalytic activity">
    <reaction evidence="2">
        <text>a quinone + NADH + 5 H(+)(in) = a quinol + NAD(+) + 4 H(+)(out)</text>
        <dbReference type="Rhea" id="RHEA:57888"/>
        <dbReference type="ChEBI" id="CHEBI:15378"/>
        <dbReference type="ChEBI" id="CHEBI:24646"/>
        <dbReference type="ChEBI" id="CHEBI:57540"/>
        <dbReference type="ChEBI" id="CHEBI:57945"/>
        <dbReference type="ChEBI" id="CHEBI:132124"/>
    </reaction>
</comment>
<comment type="cofactor">
    <cofactor evidence="2">
        <name>[4Fe-4S] cluster</name>
        <dbReference type="ChEBI" id="CHEBI:49883"/>
    </cofactor>
    <text evidence="2">Binds 1 [4Fe-4S] cluster.</text>
</comment>
<comment type="subunit">
    <text evidence="2">NDH-1 is composed of 14 different subunits. Subunits NuoB, C, D, E, F, and G constitute the peripheral sector of the complex.</text>
</comment>
<comment type="subcellular location">
    <subcellularLocation>
        <location evidence="2">Cell inner membrane</location>
        <topology evidence="2">Peripheral membrane protein</topology>
        <orientation evidence="2">Cytoplasmic side</orientation>
    </subcellularLocation>
</comment>
<comment type="similarity">
    <text evidence="2">Belongs to the complex I 20 kDa subunit family.</text>
</comment>
<evidence type="ECO:0000250" key="1"/>
<evidence type="ECO:0000255" key="2">
    <source>
        <dbReference type="HAMAP-Rule" id="MF_01356"/>
    </source>
</evidence>
<dbReference type="EC" id="7.1.1.-" evidence="2"/>
<dbReference type="EMBL" id="CP001043">
    <property type="protein sequence ID" value="ACC71187.1"/>
    <property type="molecule type" value="Genomic_DNA"/>
</dbReference>
<dbReference type="RefSeq" id="WP_006052903.1">
    <property type="nucleotide sequence ID" value="NZ_CADFGH010000002.1"/>
</dbReference>
<dbReference type="SMR" id="B2JDM7"/>
<dbReference type="STRING" id="391038.Bphy_2008"/>
<dbReference type="KEGG" id="bph:Bphy_2008"/>
<dbReference type="eggNOG" id="COG0377">
    <property type="taxonomic scope" value="Bacteria"/>
</dbReference>
<dbReference type="HOGENOM" id="CLU_055737_7_3_4"/>
<dbReference type="Proteomes" id="UP000001192">
    <property type="component" value="Chromosome 1"/>
</dbReference>
<dbReference type="GO" id="GO:0005886">
    <property type="term" value="C:plasma membrane"/>
    <property type="evidence" value="ECO:0007669"/>
    <property type="project" value="UniProtKB-SubCell"/>
</dbReference>
<dbReference type="GO" id="GO:0045271">
    <property type="term" value="C:respiratory chain complex I"/>
    <property type="evidence" value="ECO:0007669"/>
    <property type="project" value="TreeGrafter"/>
</dbReference>
<dbReference type="GO" id="GO:0051539">
    <property type="term" value="F:4 iron, 4 sulfur cluster binding"/>
    <property type="evidence" value="ECO:0007669"/>
    <property type="project" value="UniProtKB-KW"/>
</dbReference>
<dbReference type="GO" id="GO:0005506">
    <property type="term" value="F:iron ion binding"/>
    <property type="evidence" value="ECO:0007669"/>
    <property type="project" value="UniProtKB-UniRule"/>
</dbReference>
<dbReference type="GO" id="GO:0008137">
    <property type="term" value="F:NADH dehydrogenase (ubiquinone) activity"/>
    <property type="evidence" value="ECO:0007669"/>
    <property type="project" value="InterPro"/>
</dbReference>
<dbReference type="GO" id="GO:0050136">
    <property type="term" value="F:NADH:ubiquinone reductase (non-electrogenic) activity"/>
    <property type="evidence" value="ECO:0007669"/>
    <property type="project" value="UniProtKB-UniRule"/>
</dbReference>
<dbReference type="GO" id="GO:0048038">
    <property type="term" value="F:quinone binding"/>
    <property type="evidence" value="ECO:0007669"/>
    <property type="project" value="UniProtKB-KW"/>
</dbReference>
<dbReference type="GO" id="GO:0009060">
    <property type="term" value="P:aerobic respiration"/>
    <property type="evidence" value="ECO:0007669"/>
    <property type="project" value="TreeGrafter"/>
</dbReference>
<dbReference type="GO" id="GO:0015990">
    <property type="term" value="P:electron transport coupled proton transport"/>
    <property type="evidence" value="ECO:0007669"/>
    <property type="project" value="TreeGrafter"/>
</dbReference>
<dbReference type="FunFam" id="3.40.50.12280:FF:000001">
    <property type="entry name" value="NADH-quinone oxidoreductase subunit B 2"/>
    <property type="match status" value="1"/>
</dbReference>
<dbReference type="Gene3D" id="3.40.50.12280">
    <property type="match status" value="1"/>
</dbReference>
<dbReference type="HAMAP" id="MF_01356">
    <property type="entry name" value="NDH1_NuoB"/>
    <property type="match status" value="1"/>
</dbReference>
<dbReference type="InterPro" id="IPR006137">
    <property type="entry name" value="NADH_UbQ_OxRdtase-like_20kDa"/>
</dbReference>
<dbReference type="InterPro" id="IPR006138">
    <property type="entry name" value="NADH_UQ_OxRdtase_20Kd_su"/>
</dbReference>
<dbReference type="NCBIfam" id="TIGR01957">
    <property type="entry name" value="nuoB_fam"/>
    <property type="match status" value="1"/>
</dbReference>
<dbReference type="NCBIfam" id="NF005012">
    <property type="entry name" value="PRK06411.1"/>
    <property type="match status" value="1"/>
</dbReference>
<dbReference type="PANTHER" id="PTHR11995">
    <property type="entry name" value="NADH DEHYDROGENASE"/>
    <property type="match status" value="1"/>
</dbReference>
<dbReference type="PANTHER" id="PTHR11995:SF14">
    <property type="entry name" value="NADH DEHYDROGENASE [UBIQUINONE] IRON-SULFUR PROTEIN 7, MITOCHONDRIAL"/>
    <property type="match status" value="1"/>
</dbReference>
<dbReference type="Pfam" id="PF01058">
    <property type="entry name" value="Oxidored_q6"/>
    <property type="match status" value="1"/>
</dbReference>
<dbReference type="SUPFAM" id="SSF56770">
    <property type="entry name" value="HydA/Nqo6-like"/>
    <property type="match status" value="1"/>
</dbReference>
<dbReference type="PROSITE" id="PS01150">
    <property type="entry name" value="COMPLEX1_20K"/>
    <property type="match status" value="1"/>
</dbReference>
<keyword id="KW-0004">4Fe-4S</keyword>
<keyword id="KW-0997">Cell inner membrane</keyword>
<keyword id="KW-1003">Cell membrane</keyword>
<keyword id="KW-0408">Iron</keyword>
<keyword id="KW-0411">Iron-sulfur</keyword>
<keyword id="KW-0472">Membrane</keyword>
<keyword id="KW-0479">Metal-binding</keyword>
<keyword id="KW-0520">NAD</keyword>
<keyword id="KW-0874">Quinone</keyword>
<keyword id="KW-1185">Reference proteome</keyword>
<keyword id="KW-1278">Translocase</keyword>
<keyword id="KW-0813">Transport</keyword>
<keyword id="KW-0830">Ubiquinone</keyword>